<protein>
    <recommendedName>
        <fullName evidence="1">UPF0231 protein YpsIP31758_3358</fullName>
    </recommendedName>
</protein>
<organism>
    <name type="scientific">Yersinia pseudotuberculosis serotype O:1b (strain IP 31758)</name>
    <dbReference type="NCBI Taxonomy" id="349747"/>
    <lineage>
        <taxon>Bacteria</taxon>
        <taxon>Pseudomonadati</taxon>
        <taxon>Pseudomonadota</taxon>
        <taxon>Gammaproteobacteria</taxon>
        <taxon>Enterobacterales</taxon>
        <taxon>Yersiniaceae</taxon>
        <taxon>Yersinia</taxon>
    </lineage>
</organism>
<proteinExistence type="inferred from homology"/>
<sequence>MDYEFLRDLTGQVLVKFSMGHEVIGHWLNEEIKGDLVKLDHIETAADGVRGSERQWQLPGHEYTLWLDGEEVMVRANQLDLDGDEMEEGMNYYDEESLCLCGLEDFLLVLKGYRAFITQ</sequence>
<reference key="1">
    <citation type="journal article" date="2007" name="PLoS Genet.">
        <title>The complete genome sequence of Yersinia pseudotuberculosis IP31758, the causative agent of Far East scarlet-like fever.</title>
        <authorList>
            <person name="Eppinger M."/>
            <person name="Rosovitz M.J."/>
            <person name="Fricke W.F."/>
            <person name="Rasko D.A."/>
            <person name="Kokorina G."/>
            <person name="Fayolle C."/>
            <person name="Lindler L.E."/>
            <person name="Carniel E."/>
            <person name="Ravel J."/>
        </authorList>
    </citation>
    <scope>NUCLEOTIDE SEQUENCE [LARGE SCALE GENOMIC DNA]</scope>
    <source>
        <strain>IP 31758</strain>
    </source>
</reference>
<accession>A7FM37</accession>
<feature type="chain" id="PRO_1000064375" description="UPF0231 protein YpsIP31758_3358">
    <location>
        <begin position="1"/>
        <end position="119"/>
    </location>
</feature>
<evidence type="ECO:0000255" key="1">
    <source>
        <dbReference type="HAMAP-Rule" id="MF_01053"/>
    </source>
</evidence>
<gene>
    <name type="ordered locus">YpsIP31758_3358</name>
</gene>
<comment type="similarity">
    <text evidence="1">Belongs to the UPF0231 family.</text>
</comment>
<dbReference type="EMBL" id="CP000720">
    <property type="protein sequence ID" value="ABS49702.1"/>
    <property type="molecule type" value="Genomic_DNA"/>
</dbReference>
<dbReference type="SMR" id="A7FM37"/>
<dbReference type="KEGG" id="ypi:YpsIP31758_3358"/>
<dbReference type="HOGENOM" id="CLU_139226_0_0_6"/>
<dbReference type="Proteomes" id="UP000002412">
    <property type="component" value="Chromosome"/>
</dbReference>
<dbReference type="HAMAP" id="MF_01053">
    <property type="entry name" value="UPF0231"/>
    <property type="match status" value="1"/>
</dbReference>
<dbReference type="InterPro" id="IPR008249">
    <property type="entry name" value="UPF0231"/>
</dbReference>
<dbReference type="NCBIfam" id="NF003574">
    <property type="entry name" value="PRK05248.1-1"/>
    <property type="match status" value="1"/>
</dbReference>
<dbReference type="NCBIfam" id="NF003576">
    <property type="entry name" value="PRK05248.1-3"/>
    <property type="match status" value="1"/>
</dbReference>
<dbReference type="Pfam" id="PF06062">
    <property type="entry name" value="UPF0231"/>
    <property type="match status" value="1"/>
</dbReference>
<dbReference type="PIRSF" id="PIRSF006287">
    <property type="entry name" value="UCP006287"/>
    <property type="match status" value="1"/>
</dbReference>
<name>Y3358_YERP3</name>